<proteinExistence type="inferred from homology"/>
<organism>
    <name type="scientific">Clostridium perfringens (strain ATCC 13124 / DSM 756 / JCM 1290 / NCIMB 6125 / NCTC 8237 / Type A)</name>
    <dbReference type="NCBI Taxonomy" id="195103"/>
    <lineage>
        <taxon>Bacteria</taxon>
        <taxon>Bacillati</taxon>
        <taxon>Bacillota</taxon>
        <taxon>Clostridia</taxon>
        <taxon>Eubacteriales</taxon>
        <taxon>Clostridiaceae</taxon>
        <taxon>Clostridium</taxon>
    </lineage>
</organism>
<protein>
    <recommendedName>
        <fullName>Penicillin-binding protein 1A</fullName>
        <shortName>PBP1a</shortName>
    </recommendedName>
    <domain>
        <recommendedName>
            <fullName>Penicillin-insensitive transglycosylase</fullName>
            <ecNumber evidence="2">2.4.99.28</ecNumber>
        </recommendedName>
        <alternativeName>
            <fullName>Peptidoglycan TGase</fullName>
        </alternativeName>
    </domain>
    <domain>
        <recommendedName>
            <fullName>Penicillin-sensitive transpeptidase</fullName>
            <ecNumber evidence="2">3.4.16.4</ecNumber>
        </recommendedName>
        <alternativeName>
            <fullName>DD-transpeptidase</fullName>
        </alternativeName>
    </domain>
</protein>
<sequence length="830" mass="91542">MTERKREHKDRKQKKNSPKNQSKVTKFLKWFFIGILLLGITAVTVVGIYVLSIIRSSPELDVQAIQSLNQPSILYDDQGNFMDNVITREQRYVVKSEEIPDNLKKAFVAIEDERFYEHKGIDIKRIFGVIASNIKGKLSGSNTVQGASTITQQLIKNAVLTNEVSYERKIKEMYLALELEKHLSKDEILTTYLNTIPMGGYQYGVSAAAQRFFSKNVSDLNLVECAYLGGLTQAPTSYDGLSEANKENPSRYLNRTKSVLFKMHELGYISSEQYNDAINEIDTNGIKFTPNNKLSKTNFEWFTRPAITQVKQDLMNKYKYTQEEVDKLIANGGLKIYTSMDRNLQNNVQKVLDDPNNYKAITNNPNEKNEDGVYKLQASATIIDYKTGHVKALVGGRGEQPAMSHNRAYYDLKSIGSATKPLTVYGPAIDLGLGGAGSVVNDSPLSNKELSSTGYKDQPKNEYNSYRGPLTFREAIKISSNLAAIKVANEVGVSNSIAYGEKLGLVYGPHSRGISTTALGQFQNDPNNPDGGNTYTLASAFGVFGNNGVKTNAKLYTKVLDSHGNVILDTSTPEETKIFSPQASYIVYDMLKDQVESGSAKPAKFGNIPVAGKTGTTTGDKDYLFAGLTPYYSAAIWIGYDKPREMRTSSGTVTSPIFGKIMGLAHKDLQYKEVEQPSGISKIAVCMDSGLKPTSLCTQDPRGSRVYYDWFINGSAPTQYCNYHTNLHVNAPDTNDNNNSGANEGNKQQETKPEEVKPNENNNNKPNEQNPNNKPDNTPANGNNNTNNNGGGNVTPPQNQTENNTNNGVITPPQAGNNQNQNGQNNNITQ</sequence>
<gene>
    <name type="primary">pbpA</name>
    <name type="ordered locus">CPF_2218</name>
</gene>
<dbReference type="EC" id="2.4.99.28" evidence="2"/>
<dbReference type="EC" id="3.4.16.4" evidence="2"/>
<dbReference type="EMBL" id="CP000246">
    <property type="protein sequence ID" value="ABG84546.1"/>
    <property type="molecule type" value="Genomic_DNA"/>
</dbReference>
<dbReference type="RefSeq" id="WP_011591012.1">
    <property type="nucleotide sequence ID" value="NC_008261.1"/>
</dbReference>
<dbReference type="SMR" id="Q0TNZ8"/>
<dbReference type="STRING" id="195103.CPF_2218"/>
<dbReference type="CAZy" id="GT51">
    <property type="family name" value="Glycosyltransferase Family 51"/>
</dbReference>
<dbReference type="PaxDb" id="195103-CPF_2218"/>
<dbReference type="KEGG" id="cpf:CPF_2218"/>
<dbReference type="eggNOG" id="COG0744">
    <property type="taxonomic scope" value="Bacteria"/>
</dbReference>
<dbReference type="HOGENOM" id="CLU_006354_2_2_9"/>
<dbReference type="UniPathway" id="UPA00219"/>
<dbReference type="Proteomes" id="UP000001823">
    <property type="component" value="Chromosome"/>
</dbReference>
<dbReference type="GO" id="GO:0030288">
    <property type="term" value="C:outer membrane-bounded periplasmic space"/>
    <property type="evidence" value="ECO:0007669"/>
    <property type="project" value="TreeGrafter"/>
</dbReference>
<dbReference type="GO" id="GO:0005886">
    <property type="term" value="C:plasma membrane"/>
    <property type="evidence" value="ECO:0007669"/>
    <property type="project" value="UniProtKB-SubCell"/>
</dbReference>
<dbReference type="GO" id="GO:0008955">
    <property type="term" value="F:peptidoglycan glycosyltransferase activity"/>
    <property type="evidence" value="ECO:0007669"/>
    <property type="project" value="RHEA"/>
</dbReference>
<dbReference type="GO" id="GO:0009002">
    <property type="term" value="F:serine-type D-Ala-D-Ala carboxypeptidase activity"/>
    <property type="evidence" value="ECO:0007669"/>
    <property type="project" value="UniProtKB-EC"/>
</dbReference>
<dbReference type="GO" id="GO:0071555">
    <property type="term" value="P:cell wall organization"/>
    <property type="evidence" value="ECO:0007669"/>
    <property type="project" value="UniProtKB-KW"/>
</dbReference>
<dbReference type="GO" id="GO:0009252">
    <property type="term" value="P:peptidoglycan biosynthetic process"/>
    <property type="evidence" value="ECO:0007669"/>
    <property type="project" value="UniProtKB-UniPathway"/>
</dbReference>
<dbReference type="GO" id="GO:0006508">
    <property type="term" value="P:proteolysis"/>
    <property type="evidence" value="ECO:0007669"/>
    <property type="project" value="UniProtKB-KW"/>
</dbReference>
<dbReference type="GO" id="GO:0008360">
    <property type="term" value="P:regulation of cell shape"/>
    <property type="evidence" value="ECO:0007669"/>
    <property type="project" value="UniProtKB-KW"/>
</dbReference>
<dbReference type="GO" id="GO:0046677">
    <property type="term" value="P:response to antibiotic"/>
    <property type="evidence" value="ECO:0007669"/>
    <property type="project" value="UniProtKB-KW"/>
</dbReference>
<dbReference type="FunFam" id="1.10.3810.10:FF:000001">
    <property type="entry name" value="Penicillin-binding protein 1A"/>
    <property type="match status" value="1"/>
</dbReference>
<dbReference type="Gene3D" id="1.10.3810.10">
    <property type="entry name" value="Biosynthetic peptidoglycan transglycosylase-like"/>
    <property type="match status" value="1"/>
</dbReference>
<dbReference type="Gene3D" id="3.40.710.10">
    <property type="entry name" value="DD-peptidase/beta-lactamase superfamily"/>
    <property type="match status" value="1"/>
</dbReference>
<dbReference type="InterPro" id="IPR012338">
    <property type="entry name" value="Beta-lactam/transpept-like"/>
</dbReference>
<dbReference type="InterPro" id="IPR001264">
    <property type="entry name" value="Glyco_trans_51"/>
</dbReference>
<dbReference type="InterPro" id="IPR050396">
    <property type="entry name" value="Glycosyltr_51/Transpeptidase"/>
</dbReference>
<dbReference type="InterPro" id="IPR023346">
    <property type="entry name" value="Lysozyme-like_dom_sf"/>
</dbReference>
<dbReference type="InterPro" id="IPR036950">
    <property type="entry name" value="PBP_transglycosylase"/>
</dbReference>
<dbReference type="NCBIfam" id="TIGR02074">
    <property type="entry name" value="PBP_1a_fam"/>
    <property type="match status" value="1"/>
</dbReference>
<dbReference type="PANTHER" id="PTHR32282">
    <property type="entry name" value="BINDING PROTEIN TRANSPEPTIDASE, PUTATIVE-RELATED"/>
    <property type="match status" value="1"/>
</dbReference>
<dbReference type="PANTHER" id="PTHR32282:SF11">
    <property type="entry name" value="PENICILLIN-BINDING PROTEIN 1B"/>
    <property type="match status" value="1"/>
</dbReference>
<dbReference type="Pfam" id="PF00912">
    <property type="entry name" value="Transgly"/>
    <property type="match status" value="1"/>
</dbReference>
<dbReference type="SUPFAM" id="SSF56601">
    <property type="entry name" value="beta-lactamase/transpeptidase-like"/>
    <property type="match status" value="1"/>
</dbReference>
<dbReference type="SUPFAM" id="SSF53955">
    <property type="entry name" value="Lysozyme-like"/>
    <property type="match status" value="1"/>
</dbReference>
<accession>Q0TNZ8</accession>
<keyword id="KW-0046">Antibiotic resistance</keyword>
<keyword id="KW-0121">Carboxypeptidase</keyword>
<keyword id="KW-1003">Cell membrane</keyword>
<keyword id="KW-0133">Cell shape</keyword>
<keyword id="KW-0961">Cell wall biogenesis/degradation</keyword>
<keyword id="KW-0328">Glycosyltransferase</keyword>
<keyword id="KW-0378">Hydrolase</keyword>
<keyword id="KW-0472">Membrane</keyword>
<keyword id="KW-0511">Multifunctional enzyme</keyword>
<keyword id="KW-0573">Peptidoglycan synthesis</keyword>
<keyword id="KW-0645">Protease</keyword>
<keyword id="KW-0735">Signal-anchor</keyword>
<keyword id="KW-0808">Transferase</keyword>
<keyword id="KW-0812">Transmembrane</keyword>
<keyword id="KW-1133">Transmembrane helix</keyword>
<evidence type="ECO:0000250" key="1"/>
<evidence type="ECO:0000250" key="2">
    <source>
        <dbReference type="UniProtKB" id="P02918"/>
    </source>
</evidence>
<evidence type="ECO:0000250" key="3">
    <source>
        <dbReference type="UniProtKB" id="P02919"/>
    </source>
</evidence>
<evidence type="ECO:0000255" key="4"/>
<evidence type="ECO:0000256" key="5">
    <source>
        <dbReference type="SAM" id="MobiDB-lite"/>
    </source>
</evidence>
<evidence type="ECO:0000305" key="6"/>
<name>PBPA_CLOP1</name>
<feature type="chain" id="PRO_0000321876" description="Penicillin-binding protein 1A">
    <location>
        <begin position="1"/>
        <end position="830"/>
    </location>
</feature>
<feature type="topological domain" description="Cytoplasmic" evidence="4">
    <location>
        <begin position="1"/>
        <end position="30"/>
    </location>
</feature>
<feature type="transmembrane region" description="Helical; Signal-anchor for type II membrane protein" evidence="4">
    <location>
        <begin position="31"/>
        <end position="51"/>
    </location>
</feature>
<feature type="topological domain" description="Extracellular" evidence="4">
    <location>
        <begin position="52"/>
        <end position="830"/>
    </location>
</feature>
<feature type="region of interest" description="Disordered" evidence="5">
    <location>
        <begin position="1"/>
        <end position="20"/>
    </location>
</feature>
<feature type="region of interest" description="Transglycosylase" evidence="1">
    <location>
        <begin position="72"/>
        <end position="244"/>
    </location>
</feature>
<feature type="region of interest" description="Transpeptidase" evidence="1">
    <location>
        <begin position="378"/>
        <end position="663"/>
    </location>
</feature>
<feature type="region of interest" description="Disordered" evidence="5">
    <location>
        <begin position="731"/>
        <end position="830"/>
    </location>
</feature>
<feature type="compositionally biased region" description="Basic residues" evidence="5">
    <location>
        <begin position="1"/>
        <end position="17"/>
    </location>
</feature>
<feature type="compositionally biased region" description="Low complexity" evidence="5">
    <location>
        <begin position="735"/>
        <end position="746"/>
    </location>
</feature>
<feature type="compositionally biased region" description="Basic and acidic residues" evidence="5">
    <location>
        <begin position="747"/>
        <end position="758"/>
    </location>
</feature>
<feature type="compositionally biased region" description="Low complexity" evidence="5">
    <location>
        <begin position="759"/>
        <end position="807"/>
    </location>
</feature>
<feature type="compositionally biased region" description="Low complexity" evidence="5">
    <location>
        <begin position="816"/>
        <end position="830"/>
    </location>
</feature>
<feature type="active site" description="Proton donor; for transglycosylase activity" evidence="3">
    <location>
        <position position="111"/>
    </location>
</feature>
<feature type="active site" description="Acyl-ester intermediate; for transpeptidase activity" evidence="3">
    <location>
        <position position="417"/>
    </location>
</feature>
<reference key="1">
    <citation type="journal article" date="2006" name="Genome Res.">
        <title>Skewed genomic variability in strains of the toxigenic bacterial pathogen, Clostridium perfringens.</title>
        <authorList>
            <person name="Myers G.S.A."/>
            <person name="Rasko D.A."/>
            <person name="Cheung J.K."/>
            <person name="Ravel J."/>
            <person name="Seshadri R."/>
            <person name="DeBoy R.T."/>
            <person name="Ren Q."/>
            <person name="Varga J."/>
            <person name="Awad M.M."/>
            <person name="Brinkac L.M."/>
            <person name="Daugherty S.C."/>
            <person name="Haft D.H."/>
            <person name="Dodson R.J."/>
            <person name="Madupu R."/>
            <person name="Nelson W.C."/>
            <person name="Rosovitz M.J."/>
            <person name="Sullivan S.A."/>
            <person name="Khouri H."/>
            <person name="Dimitrov G.I."/>
            <person name="Watkins K.L."/>
            <person name="Mulligan S."/>
            <person name="Benton J."/>
            <person name="Radune D."/>
            <person name="Fisher D.J."/>
            <person name="Atkins H.S."/>
            <person name="Hiscox T."/>
            <person name="Jost B.H."/>
            <person name="Billington S.J."/>
            <person name="Songer J.G."/>
            <person name="McClane B.A."/>
            <person name="Titball R.W."/>
            <person name="Rood J.I."/>
            <person name="Melville S.B."/>
            <person name="Paulsen I.T."/>
        </authorList>
    </citation>
    <scope>NUCLEOTIDE SEQUENCE [LARGE SCALE GENOMIC DNA]</scope>
    <source>
        <strain>ATCC 13124 / DSM 756 / JCM 1290 / NCIMB 6125 / NCTC 8237 / S 107 / Type A</strain>
    </source>
</reference>
<comment type="function">
    <text evidence="1">Cell wall formation. Synthesis of cross-linked peptidoglycan from the lipid intermediates. The enzyme has a penicillin-insensitive transglycosylase N-terminal domain (formation of linear glycan strands) and a penicillin-sensitive transpeptidase C-terminal domain (cross-linking of the peptide subunits).</text>
</comment>
<comment type="catalytic activity">
    <reaction evidence="2">
        <text>[GlcNAc-(1-&gt;4)-Mur2Ac(oyl-L-Ala-gamma-D-Glu-L-Lys-D-Ala-D-Ala)](n)-di-trans,octa-cis-undecaprenyl diphosphate + beta-D-GlcNAc-(1-&gt;4)-Mur2Ac(oyl-L-Ala-gamma-D-Glu-L-Lys-D-Ala-D-Ala)-di-trans,octa-cis-undecaprenyl diphosphate = [GlcNAc-(1-&gt;4)-Mur2Ac(oyl-L-Ala-gamma-D-Glu-L-Lys-D-Ala-D-Ala)](n+1)-di-trans,octa-cis-undecaprenyl diphosphate + di-trans,octa-cis-undecaprenyl diphosphate + H(+)</text>
        <dbReference type="Rhea" id="RHEA:23708"/>
        <dbReference type="Rhea" id="RHEA-COMP:9602"/>
        <dbReference type="Rhea" id="RHEA-COMP:9603"/>
        <dbReference type="ChEBI" id="CHEBI:15378"/>
        <dbReference type="ChEBI" id="CHEBI:58405"/>
        <dbReference type="ChEBI" id="CHEBI:60033"/>
        <dbReference type="ChEBI" id="CHEBI:78435"/>
        <dbReference type="EC" id="2.4.99.28"/>
    </reaction>
</comment>
<comment type="catalytic activity">
    <reaction evidence="2">
        <text>Preferential cleavage: (Ac)2-L-Lys-D-Ala-|-D-Ala. Also transpeptidation of peptidyl-alanyl moieties that are N-acyl substituents of D-alanine.</text>
        <dbReference type="EC" id="3.4.16.4"/>
    </reaction>
</comment>
<comment type="pathway">
    <text>Cell wall biogenesis; peptidoglycan biosynthesis.</text>
</comment>
<comment type="subcellular location">
    <subcellularLocation>
        <location evidence="6">Cell membrane</location>
        <topology evidence="6">Single-pass type II membrane protein</topology>
    </subcellularLocation>
</comment>
<comment type="similarity">
    <text evidence="6">In the N-terminal section; belongs to the glycosyltransferase 51 family.</text>
</comment>
<comment type="similarity">
    <text evidence="6">In the C-terminal section; belongs to the transpeptidase family.</text>
</comment>